<protein>
    <recommendedName>
        <fullName>Ribulose bisphosphate carboxylase/oxygenase activase 2, chloroplastic</fullName>
        <shortName>RA 2</shortName>
        <shortName>RuBisCO activase 2</shortName>
    </recommendedName>
</protein>
<evidence type="ECO:0000255" key="1"/>
<evidence type="ECO:0000305" key="2"/>
<keyword id="KW-0067">ATP-binding</keyword>
<keyword id="KW-0150">Chloroplast</keyword>
<keyword id="KW-0547">Nucleotide-binding</keyword>
<keyword id="KW-0934">Plastid</keyword>
<keyword id="KW-1185">Reference proteome</keyword>
<keyword id="KW-0809">Transit peptide</keyword>
<sequence>MATSVSTIGAANKAPLSLNNSVAGTSVPSTAFFGKTLKKVYGKGVSSPKVTNRSLRIAAEEKDADPKKQTYSDRWKGLVQDFSDDQQDIARGKGMVDSLFQAPTGTGTHHAVLQSYEYVSQGLRQYNMDNTLDGFYIAPSFMDKLVVHITKNFLKLPNIKVPLILGVWGGKGQGKSFQCELVFRKMGINPIMMSAGELESGNAGEPAKLIRQRYREAAEIIRKGNICCLFINDLDAGAGRMGGTTQYTVNNQMVNATLMNIADNPTNVQLPGMYNKQENARVPIIVTGNDFSTLYAPLIRDGRMEKFYWAPTREDRIGVCKGIFRTDNVPEEAVIKIVDTFPGQSIDFFGALRARVYDDEVRKWVSGTGIEAIGDKLLNSFDGPPTFEQPKMTVEKLLEYGNMLVQEQENVKRVQLAETYLKEAALGDANADAINTGNF</sequence>
<feature type="transit peptide" description="Chloroplast" evidence="1">
    <location>
        <begin position="1"/>
        <end position="58"/>
    </location>
</feature>
<feature type="chain" id="PRO_0000030243" description="Ribulose bisphosphate carboxylase/oxygenase activase 2, chloroplastic">
    <location>
        <begin position="59"/>
        <end position="439"/>
    </location>
</feature>
<feature type="binding site" evidence="1">
    <location>
        <begin position="169"/>
        <end position="176"/>
    </location>
    <ligand>
        <name>ATP</name>
        <dbReference type="ChEBI" id="CHEBI:30616"/>
    </ligand>
</feature>
<feature type="sequence variant" description="In clone PTA1.1.">
    <original>R</original>
    <variation>S</variation>
    <location>
        <position position="211"/>
    </location>
</feature>
<feature type="sequence variant" description="In clone PTA1.1.">
    <original>I</original>
    <variation>M</variation>
    <location>
        <position position="226"/>
    </location>
</feature>
<feature type="sequence variant" description="In clone PTA1.1.">
    <original>I</original>
    <variation>V</variation>
    <location>
        <position position="335"/>
    </location>
</feature>
<comment type="function">
    <text>Activation of RuBisCO (ribulose-1,5-bisphosphate carboxylase/oxygenase; EC 4.1.1.39) involves the ATP-dependent carboxylation of the epsilon-amino group of lysine leading to a carbamate structure.</text>
</comment>
<comment type="subcellular location">
    <subcellularLocation>
        <location>Plastid</location>
        <location>Chloroplast stroma</location>
    </subcellularLocation>
</comment>
<comment type="similarity">
    <text evidence="2">Belongs to the RuBisCO activase family.</text>
</comment>
<dbReference type="EMBL" id="Z14980">
    <property type="protein sequence ID" value="CAA78703.1"/>
    <property type="molecule type" value="mRNA"/>
</dbReference>
<dbReference type="EMBL" id="Z14981">
    <property type="protein sequence ID" value="CAA78704.1"/>
    <property type="molecule type" value="mRNA"/>
</dbReference>
<dbReference type="PIR" id="S25483">
    <property type="entry name" value="S25483"/>
</dbReference>
<dbReference type="RefSeq" id="NP_001312578.1">
    <property type="nucleotide sequence ID" value="NM_001325649.1"/>
</dbReference>
<dbReference type="SMR" id="Q40565"/>
<dbReference type="STRING" id="4097.Q40565"/>
<dbReference type="PaxDb" id="4097-Q40565"/>
<dbReference type="GeneID" id="107798594"/>
<dbReference type="KEGG" id="nta:107798594"/>
<dbReference type="OrthoDB" id="2014558at2759"/>
<dbReference type="Proteomes" id="UP000084051">
    <property type="component" value="Unplaced"/>
</dbReference>
<dbReference type="GO" id="GO:0009570">
    <property type="term" value="C:chloroplast stroma"/>
    <property type="evidence" value="ECO:0000318"/>
    <property type="project" value="GO_Central"/>
</dbReference>
<dbReference type="GO" id="GO:0005524">
    <property type="term" value="F:ATP binding"/>
    <property type="evidence" value="ECO:0007669"/>
    <property type="project" value="UniProtKB-KW"/>
</dbReference>
<dbReference type="GO" id="GO:0016887">
    <property type="term" value="F:ATP hydrolysis activity"/>
    <property type="evidence" value="ECO:0007669"/>
    <property type="project" value="InterPro"/>
</dbReference>
<dbReference type="GO" id="GO:0046863">
    <property type="term" value="F:ribulose-1,5-bisphosphate carboxylase/oxygenase activator activity"/>
    <property type="evidence" value="ECO:0000318"/>
    <property type="project" value="GO_Central"/>
</dbReference>
<dbReference type="FunFam" id="1.10.8.1070:FF:000001">
    <property type="entry name" value="Ribulose bisphosphate carboxylase/oxygenase activase, chloroplastic"/>
    <property type="match status" value="1"/>
</dbReference>
<dbReference type="FunFam" id="3.40.50.300:FF:000258">
    <property type="entry name" value="Ribulose bisphosphate carboxylase/oxygenase activase, chloroplastic"/>
    <property type="match status" value="1"/>
</dbReference>
<dbReference type="Gene3D" id="1.10.8.1070">
    <property type="match status" value="1"/>
</dbReference>
<dbReference type="Gene3D" id="3.40.50.300">
    <property type="entry name" value="P-loop containing nucleotide triphosphate hydrolases"/>
    <property type="match status" value="1"/>
</dbReference>
<dbReference type="InterPro" id="IPR003959">
    <property type="entry name" value="ATPase_AAA_core"/>
</dbReference>
<dbReference type="InterPro" id="IPR027417">
    <property type="entry name" value="P-loop_NTPase"/>
</dbReference>
<dbReference type="InterPro" id="IPR044960">
    <property type="entry name" value="RCA-like"/>
</dbReference>
<dbReference type="InterPro" id="IPR048571">
    <property type="entry name" value="RuBisCO_activase_AAA_helical"/>
</dbReference>
<dbReference type="PANTHER" id="PTHR32429">
    <property type="match status" value="1"/>
</dbReference>
<dbReference type="PANTHER" id="PTHR32429:SF32">
    <property type="entry name" value="RIBULOSE BISPHOSPHATE CARBOXYLASE_OXYGENASE ACTIVASE, CHLOROPLASTIC"/>
    <property type="match status" value="1"/>
</dbReference>
<dbReference type="Pfam" id="PF00004">
    <property type="entry name" value="AAA"/>
    <property type="match status" value="1"/>
</dbReference>
<dbReference type="Pfam" id="PF21228">
    <property type="entry name" value="RuBisCO_activase_AAA_helical"/>
    <property type="match status" value="1"/>
</dbReference>
<dbReference type="SUPFAM" id="SSF52540">
    <property type="entry name" value="P-loop containing nucleoside triphosphate hydrolases"/>
    <property type="match status" value="1"/>
</dbReference>
<reference key="1">
    <citation type="journal article" date="1993" name="Plant Physiol.">
        <title>Ribulose-1,5-bisphosphate carboxylase/oxygenase activase cDNAs from Nicotiana tabacum.</title>
        <authorList>
            <person name="Qian J."/>
            <person name="Rodermel S."/>
        </authorList>
    </citation>
    <scope>NUCLEOTIDE SEQUENCE [MRNA]</scope>
    <source>
        <strain>cv. SR1</strain>
        <tissue>Leaf</tissue>
    </source>
</reference>
<gene>
    <name type="primary">RCA</name>
</gene>
<proteinExistence type="evidence at transcript level"/>
<name>RCA2_TOBAC</name>
<accession>Q40565</accession>
<accession>Q40566</accession>
<organism>
    <name type="scientific">Nicotiana tabacum</name>
    <name type="common">Common tobacco</name>
    <dbReference type="NCBI Taxonomy" id="4097"/>
    <lineage>
        <taxon>Eukaryota</taxon>
        <taxon>Viridiplantae</taxon>
        <taxon>Streptophyta</taxon>
        <taxon>Embryophyta</taxon>
        <taxon>Tracheophyta</taxon>
        <taxon>Spermatophyta</taxon>
        <taxon>Magnoliopsida</taxon>
        <taxon>eudicotyledons</taxon>
        <taxon>Gunneridae</taxon>
        <taxon>Pentapetalae</taxon>
        <taxon>asterids</taxon>
        <taxon>lamiids</taxon>
        <taxon>Solanales</taxon>
        <taxon>Solanaceae</taxon>
        <taxon>Nicotianoideae</taxon>
        <taxon>Nicotianeae</taxon>
        <taxon>Nicotiana</taxon>
    </lineage>
</organism>